<reference key="1">
    <citation type="journal article" date="2002" name="Biochem. Biophys. Res. Commun.">
        <title>Cloning and tissue distribution of three murine alpha/beta hydrolase fold protein cDNAs.</title>
        <authorList>
            <person name="Edgar A.J."/>
            <person name="Polak J.M."/>
        </authorList>
    </citation>
    <scope>NUCLEOTIDE SEQUENCE [MRNA]</scope>
    <scope>TISSUE SPECIFICITY</scope>
    <scope>DEVELOPMENTAL STAGE</scope>
    <source>
        <tissue>Lung</tissue>
    </source>
</reference>
<reference key="2">
    <citation type="journal article" date="2005" name="Science">
        <title>The transcriptional landscape of the mammalian genome.</title>
        <authorList>
            <person name="Carninci P."/>
            <person name="Kasukawa T."/>
            <person name="Katayama S."/>
            <person name="Gough J."/>
            <person name="Frith M.C."/>
            <person name="Maeda N."/>
            <person name="Oyama R."/>
            <person name="Ravasi T."/>
            <person name="Lenhard B."/>
            <person name="Wells C."/>
            <person name="Kodzius R."/>
            <person name="Shimokawa K."/>
            <person name="Bajic V.B."/>
            <person name="Brenner S.E."/>
            <person name="Batalov S."/>
            <person name="Forrest A.R."/>
            <person name="Zavolan M."/>
            <person name="Davis M.J."/>
            <person name="Wilming L.G."/>
            <person name="Aidinis V."/>
            <person name="Allen J.E."/>
            <person name="Ambesi-Impiombato A."/>
            <person name="Apweiler R."/>
            <person name="Aturaliya R.N."/>
            <person name="Bailey T.L."/>
            <person name="Bansal M."/>
            <person name="Baxter L."/>
            <person name="Beisel K.W."/>
            <person name="Bersano T."/>
            <person name="Bono H."/>
            <person name="Chalk A.M."/>
            <person name="Chiu K.P."/>
            <person name="Choudhary V."/>
            <person name="Christoffels A."/>
            <person name="Clutterbuck D.R."/>
            <person name="Crowe M.L."/>
            <person name="Dalla E."/>
            <person name="Dalrymple B.P."/>
            <person name="de Bono B."/>
            <person name="Della Gatta G."/>
            <person name="di Bernardo D."/>
            <person name="Down T."/>
            <person name="Engstrom P."/>
            <person name="Fagiolini M."/>
            <person name="Faulkner G."/>
            <person name="Fletcher C.F."/>
            <person name="Fukushima T."/>
            <person name="Furuno M."/>
            <person name="Futaki S."/>
            <person name="Gariboldi M."/>
            <person name="Georgii-Hemming P."/>
            <person name="Gingeras T.R."/>
            <person name="Gojobori T."/>
            <person name="Green R.E."/>
            <person name="Gustincich S."/>
            <person name="Harbers M."/>
            <person name="Hayashi Y."/>
            <person name="Hensch T.K."/>
            <person name="Hirokawa N."/>
            <person name="Hill D."/>
            <person name="Huminiecki L."/>
            <person name="Iacono M."/>
            <person name="Ikeo K."/>
            <person name="Iwama A."/>
            <person name="Ishikawa T."/>
            <person name="Jakt M."/>
            <person name="Kanapin A."/>
            <person name="Katoh M."/>
            <person name="Kawasawa Y."/>
            <person name="Kelso J."/>
            <person name="Kitamura H."/>
            <person name="Kitano H."/>
            <person name="Kollias G."/>
            <person name="Krishnan S.P."/>
            <person name="Kruger A."/>
            <person name="Kummerfeld S.K."/>
            <person name="Kurochkin I.V."/>
            <person name="Lareau L.F."/>
            <person name="Lazarevic D."/>
            <person name="Lipovich L."/>
            <person name="Liu J."/>
            <person name="Liuni S."/>
            <person name="McWilliam S."/>
            <person name="Madan Babu M."/>
            <person name="Madera M."/>
            <person name="Marchionni L."/>
            <person name="Matsuda H."/>
            <person name="Matsuzawa S."/>
            <person name="Miki H."/>
            <person name="Mignone F."/>
            <person name="Miyake S."/>
            <person name="Morris K."/>
            <person name="Mottagui-Tabar S."/>
            <person name="Mulder N."/>
            <person name="Nakano N."/>
            <person name="Nakauchi H."/>
            <person name="Ng P."/>
            <person name="Nilsson R."/>
            <person name="Nishiguchi S."/>
            <person name="Nishikawa S."/>
            <person name="Nori F."/>
            <person name="Ohara O."/>
            <person name="Okazaki Y."/>
            <person name="Orlando V."/>
            <person name="Pang K.C."/>
            <person name="Pavan W.J."/>
            <person name="Pavesi G."/>
            <person name="Pesole G."/>
            <person name="Petrovsky N."/>
            <person name="Piazza S."/>
            <person name="Reed J."/>
            <person name="Reid J.F."/>
            <person name="Ring B.Z."/>
            <person name="Ringwald M."/>
            <person name="Rost B."/>
            <person name="Ruan Y."/>
            <person name="Salzberg S.L."/>
            <person name="Sandelin A."/>
            <person name="Schneider C."/>
            <person name="Schoenbach C."/>
            <person name="Sekiguchi K."/>
            <person name="Semple C.A."/>
            <person name="Seno S."/>
            <person name="Sessa L."/>
            <person name="Sheng Y."/>
            <person name="Shibata Y."/>
            <person name="Shimada H."/>
            <person name="Shimada K."/>
            <person name="Silva D."/>
            <person name="Sinclair B."/>
            <person name="Sperling S."/>
            <person name="Stupka E."/>
            <person name="Sugiura K."/>
            <person name="Sultana R."/>
            <person name="Takenaka Y."/>
            <person name="Taki K."/>
            <person name="Tammoja K."/>
            <person name="Tan S.L."/>
            <person name="Tang S."/>
            <person name="Taylor M.S."/>
            <person name="Tegner J."/>
            <person name="Teichmann S.A."/>
            <person name="Ueda H.R."/>
            <person name="van Nimwegen E."/>
            <person name="Verardo R."/>
            <person name="Wei C.L."/>
            <person name="Yagi K."/>
            <person name="Yamanishi H."/>
            <person name="Zabarovsky E."/>
            <person name="Zhu S."/>
            <person name="Zimmer A."/>
            <person name="Hide W."/>
            <person name="Bult C."/>
            <person name="Grimmond S.M."/>
            <person name="Teasdale R.D."/>
            <person name="Liu E.T."/>
            <person name="Brusic V."/>
            <person name="Quackenbush J."/>
            <person name="Wahlestedt C."/>
            <person name="Mattick J.S."/>
            <person name="Hume D.A."/>
            <person name="Kai C."/>
            <person name="Sasaki D."/>
            <person name="Tomaru Y."/>
            <person name="Fukuda S."/>
            <person name="Kanamori-Katayama M."/>
            <person name="Suzuki M."/>
            <person name="Aoki J."/>
            <person name="Arakawa T."/>
            <person name="Iida J."/>
            <person name="Imamura K."/>
            <person name="Itoh M."/>
            <person name="Kato T."/>
            <person name="Kawaji H."/>
            <person name="Kawagashira N."/>
            <person name="Kawashima T."/>
            <person name="Kojima M."/>
            <person name="Kondo S."/>
            <person name="Konno H."/>
            <person name="Nakano K."/>
            <person name="Ninomiya N."/>
            <person name="Nishio T."/>
            <person name="Okada M."/>
            <person name="Plessy C."/>
            <person name="Shibata K."/>
            <person name="Shiraki T."/>
            <person name="Suzuki S."/>
            <person name="Tagami M."/>
            <person name="Waki K."/>
            <person name="Watahiki A."/>
            <person name="Okamura-Oho Y."/>
            <person name="Suzuki H."/>
            <person name="Kawai J."/>
            <person name="Hayashizaki Y."/>
        </authorList>
    </citation>
    <scope>NUCLEOTIDE SEQUENCE [LARGE SCALE MRNA]</scope>
    <source>
        <strain>NOD</strain>
        <tissue>Spleen</tissue>
    </source>
</reference>
<reference key="3">
    <citation type="journal article" date="2004" name="Genome Res.">
        <title>The status, quality, and expansion of the NIH full-length cDNA project: the Mammalian Gene Collection (MGC).</title>
        <authorList>
            <consortium name="The MGC Project Team"/>
        </authorList>
    </citation>
    <scope>NUCLEOTIDE SEQUENCE [LARGE SCALE MRNA]</scope>
    <source>
        <strain>FVB/N</strain>
        <tissue>Colon</tissue>
    </source>
</reference>
<reference key="4">
    <citation type="journal article" date="2010" name="Cell">
        <title>A tissue-specific atlas of mouse protein phosphorylation and expression.</title>
        <authorList>
            <person name="Huttlin E.L."/>
            <person name="Jedrychowski M.P."/>
            <person name="Elias J.E."/>
            <person name="Goswami T."/>
            <person name="Rad R."/>
            <person name="Beausoleil S.A."/>
            <person name="Villen J."/>
            <person name="Haas W."/>
            <person name="Sowa M.E."/>
            <person name="Gygi S.P."/>
        </authorList>
    </citation>
    <scope>IDENTIFICATION BY MASS SPECTROMETRY [LARGE SCALE ANALYSIS]</scope>
    <source>
        <tissue>Brown adipose tissue</tissue>
        <tissue>Heart</tissue>
        <tissue>Kidney</tissue>
        <tissue>Liver</tissue>
    </source>
</reference>
<protein>
    <recommendedName>
        <fullName evidence="4">Protein ABHD1</fullName>
        <ecNumber>3.1.1.-</ecNumber>
    </recommendedName>
    <alternativeName>
        <fullName evidence="4">Alpha/beta hydrolase domain-containing protein 1</fullName>
        <shortName evidence="5">Abhydrolase domain-containing protein 1</shortName>
    </alternativeName>
    <alternativeName>
        <fullName>Lung alpha/beta hydrolase 1</fullName>
        <shortName>MmLABH1</shortName>
    </alternativeName>
</protein>
<organism>
    <name type="scientific">Mus musculus</name>
    <name type="common">Mouse</name>
    <dbReference type="NCBI Taxonomy" id="10090"/>
    <lineage>
        <taxon>Eukaryota</taxon>
        <taxon>Metazoa</taxon>
        <taxon>Chordata</taxon>
        <taxon>Craniata</taxon>
        <taxon>Vertebrata</taxon>
        <taxon>Euteleostomi</taxon>
        <taxon>Mammalia</taxon>
        <taxon>Eutheria</taxon>
        <taxon>Euarchontoglires</taxon>
        <taxon>Glires</taxon>
        <taxon>Rodentia</taxon>
        <taxon>Myomorpha</taxon>
        <taxon>Muroidea</taxon>
        <taxon>Muridae</taxon>
        <taxon>Murinae</taxon>
        <taxon>Mus</taxon>
        <taxon>Mus</taxon>
    </lineage>
</organism>
<dbReference type="EC" id="3.1.1.-"/>
<dbReference type="EMBL" id="AF189764">
    <property type="protein sequence ID" value="AAF01068.2"/>
    <property type="molecule type" value="mRNA"/>
</dbReference>
<dbReference type="EMBL" id="AK156413">
    <property type="protein sequence ID" value="BAE33704.1"/>
    <property type="molecule type" value="mRNA"/>
</dbReference>
<dbReference type="EMBL" id="BC013505">
    <property type="protein sequence ID" value="AAH13505.1"/>
    <property type="molecule type" value="mRNA"/>
</dbReference>
<dbReference type="RefSeq" id="NP_067279.2">
    <property type="nucleotide sequence ID" value="NM_021304.3"/>
</dbReference>
<dbReference type="FunCoup" id="Q9QZC8">
    <property type="interactions" value="64"/>
</dbReference>
<dbReference type="ESTHER" id="mouse-abhd1">
    <property type="family name" value="abh_upf0017"/>
</dbReference>
<dbReference type="GlyCosmos" id="Q9QZC8">
    <property type="glycosylation" value="1 site, No reported glycans"/>
</dbReference>
<dbReference type="GlyGen" id="Q9QZC8">
    <property type="glycosylation" value="1 site"/>
</dbReference>
<dbReference type="PhosphoSitePlus" id="Q9QZC8"/>
<dbReference type="SwissPalm" id="Q9QZC8"/>
<dbReference type="PeptideAtlas" id="Q9QZC8"/>
<dbReference type="ProteomicsDB" id="285825"/>
<dbReference type="Pumba" id="Q9QZC8"/>
<dbReference type="DNASU" id="57742"/>
<dbReference type="GeneID" id="57742"/>
<dbReference type="KEGG" id="mmu:57742"/>
<dbReference type="UCSC" id="uc008wwp.1">
    <property type="organism name" value="mouse"/>
</dbReference>
<dbReference type="AGR" id="MGI:1931013"/>
<dbReference type="CTD" id="84696"/>
<dbReference type="MGI" id="MGI:1931013">
    <property type="gene designation" value="Abhd1"/>
</dbReference>
<dbReference type="InParanoid" id="Q9QZC8"/>
<dbReference type="PhylomeDB" id="Q9QZC8"/>
<dbReference type="BioGRID-ORCS" id="57742">
    <property type="hits" value="2 hits in 17 CRISPR screens"/>
</dbReference>
<dbReference type="PRO" id="PR:Q9QZC8"/>
<dbReference type="Proteomes" id="UP000000589">
    <property type="component" value="Unplaced"/>
</dbReference>
<dbReference type="RNAct" id="Q9QZC8">
    <property type="molecule type" value="protein"/>
</dbReference>
<dbReference type="GO" id="GO:0016020">
    <property type="term" value="C:membrane"/>
    <property type="evidence" value="ECO:0007669"/>
    <property type="project" value="UniProtKB-SubCell"/>
</dbReference>
<dbReference type="GO" id="GO:0052689">
    <property type="term" value="F:carboxylic ester hydrolase activity"/>
    <property type="evidence" value="ECO:0007669"/>
    <property type="project" value="UniProtKB-KW"/>
</dbReference>
<dbReference type="FunFam" id="3.40.50.1820:FF:000167">
    <property type="entry name" value="Abhydrolase domain containing 1"/>
    <property type="match status" value="1"/>
</dbReference>
<dbReference type="Gene3D" id="3.40.50.1820">
    <property type="entry name" value="alpha/beta hydrolase"/>
    <property type="match status" value="1"/>
</dbReference>
<dbReference type="InterPro" id="IPR000073">
    <property type="entry name" value="AB_hydrolase_1"/>
</dbReference>
<dbReference type="InterPro" id="IPR050960">
    <property type="entry name" value="AB_hydrolase_4_sf"/>
</dbReference>
<dbReference type="InterPro" id="IPR029058">
    <property type="entry name" value="AB_hydrolase_fold"/>
</dbReference>
<dbReference type="InterPro" id="IPR012020">
    <property type="entry name" value="ABHD4"/>
</dbReference>
<dbReference type="PANTHER" id="PTHR10794">
    <property type="entry name" value="ABHYDROLASE DOMAIN-CONTAINING PROTEIN"/>
    <property type="match status" value="1"/>
</dbReference>
<dbReference type="PANTHER" id="PTHR10794:SF60">
    <property type="entry name" value="PROTEIN ABHD1"/>
    <property type="match status" value="1"/>
</dbReference>
<dbReference type="Pfam" id="PF00561">
    <property type="entry name" value="Abhydrolase_1"/>
    <property type="match status" value="1"/>
</dbReference>
<dbReference type="PIRSF" id="PIRSF005211">
    <property type="entry name" value="Ab_hydro_YheT"/>
    <property type="match status" value="1"/>
</dbReference>
<dbReference type="SUPFAM" id="SSF53474">
    <property type="entry name" value="alpha/beta-Hydrolases"/>
    <property type="match status" value="1"/>
</dbReference>
<accession>Q9QZC8</accession>
<keyword id="KW-0325">Glycoprotein</keyword>
<keyword id="KW-0378">Hydrolase</keyword>
<keyword id="KW-0472">Membrane</keyword>
<keyword id="KW-1185">Reference proteome</keyword>
<keyword id="KW-0719">Serine esterase</keyword>
<keyword id="KW-0735">Signal-anchor</keyword>
<keyword id="KW-0812">Transmembrane</keyword>
<keyword id="KW-1133">Transmembrane helix</keyword>
<sequence length="412" mass="45725">MEYPYTTKMLSSSLSPQNGTWSDTISLLLALGVALYLGYYWACVPQRPRLVAGPQFLAFLEQHCPVTVETFYPTLWCFEGRLQTIFRVLLQSQPVVPYRSEVLQTPDGGQFLLDWAEQPNSTHYPDPTTQPIVLLLPGISGSSQEPYILHLVNQALKDGYRAVVFNNRGCRGEELLTHRAYCASNTEDLETVVKHIKRRYSQAPLLAVGISFGGILVLNYLAQTGKAGGLVAGLTMSACWDSFETVDSLETPLNSLLFNQPLTAGLCRLVARNRKPIEKVLDVDFAIKARTIRQLDERYTSVAFGYKDCAAYYQAASPRTKVDAIHTPVLCLNAADDPFSPVHAFPLQAAQKSPYVALLITARGGHIGFLEGLMPWQHCYMNRVLHQYARAIFQHSVGLPDLGVLTPEDGKS</sequence>
<comment type="subcellular location">
    <subcellularLocation>
        <location evidence="4">Membrane</location>
        <topology evidence="4">Single-pass type II membrane protein</topology>
    </subcellularLocation>
</comment>
<comment type="tissue specificity">
    <text evidence="3">Widely expressed with higher expression in liver.</text>
</comment>
<comment type="developmental stage">
    <text evidence="3">Detected in embryos from 7 dpc to 17 dpc.</text>
</comment>
<comment type="similarity">
    <text evidence="4">Belongs to the AB hydrolase superfamily. AB hydrolase 4 family.</text>
</comment>
<evidence type="ECO:0000250" key="1"/>
<evidence type="ECO:0000255" key="2"/>
<evidence type="ECO:0000269" key="3">
    <source>
    </source>
</evidence>
<evidence type="ECO:0000305" key="4"/>
<evidence type="ECO:0000312" key="5">
    <source>
        <dbReference type="MGI" id="MGI:1931013"/>
    </source>
</evidence>
<gene>
    <name evidence="5" type="primary">Abhd1</name>
    <name type="synonym">Labh1</name>
</gene>
<proteinExistence type="evidence at protein level"/>
<feature type="chain" id="PRO_0000280205" description="Protein ABHD1">
    <location>
        <begin position="1"/>
        <end position="412"/>
    </location>
</feature>
<feature type="transmembrane region" description="Helical; Signal-anchor for type II membrane protein" evidence="2">
    <location>
        <begin position="25"/>
        <end position="45"/>
    </location>
</feature>
<feature type="domain" description="AB hydrolase-1" evidence="2">
    <location>
        <begin position="131"/>
        <end position="372"/>
    </location>
</feature>
<feature type="active site" description="Charge relay system" evidence="1">
    <location>
        <position position="211"/>
    </location>
</feature>
<feature type="active site" description="Charge relay system" evidence="1">
    <location>
        <position position="337"/>
    </location>
</feature>
<feature type="active site" description="Charge relay system" evidence="1">
    <location>
        <position position="366"/>
    </location>
</feature>
<feature type="glycosylation site" description="N-linked (GlcNAc...) asparagine" evidence="2">
    <location>
        <position position="18"/>
    </location>
</feature>
<name>ABHD1_MOUSE</name>